<gene>
    <name evidence="12" type="primary">Gria3</name>
    <name type="synonym">GluA3</name>
    <name type="synonym">Glur3</name>
    <name type="synonym">Kiaa4184</name>
</gene>
<proteinExistence type="evidence at protein level"/>
<sequence length="888" mass="100527">MGQSVLRAVFFLVLGLLGHSHGGFPNTISIGGLFMRNTVQEHSAFRFAVQLYNTNQNTTEKPFHLNYHVDHLDSSNSFSVTNAFCSQFSRGVYAIFGFYDQMSMNTLTSFCGALHTSFVTPSFPTDADVQFVIQMRPALKGAILSLLGYYKWEKFVYLYDTERGFSILQAIMEAAVQNNWQVTARSVGNIKDIQEFRRIIEEMDRRQEKRYLIDCEVERINTILEQVVILGKHSRGYHYMLANLGFTDIVLERVMHGGANITGFQIVNNENPMVQQFIQRWVRLDEREFPEAKNAPLKYTSALTHDAILVIAEAFRYLRRQRVDVSRRGSAGDCLANPAVPWSQGIDIERALKMVQVQGMTGNIQFDTYGRRTNYTIDVYEMKVSGSRKAGYWNEYERFVPFSDQQISNDSSSSENRTIVVTTILESPYVMYKKNHEQLEGNERYEGYCVDLAYEIAKHVRIKYKLSIVGDGKYGARDPETKIWNGMVGELVYGRADIAVAPLTITLVREEVIDFSKPFMSLGISIMIKKPQKSKPGVFSFLDPLAYEIWMCIVFAYIGVSVVLFLVSRFSPYEWHLEDNNEEPRDPQSPPDPPNEFGIFNSLWFSLGAFMQQGCDISPRSLSGRIVGGVWWFFTLIIISSYTANLAAFLTVERMVSPIESAEDLAKQTEIAYGTLDSGSTKEFFRRSKIAVYEKMWSYMKSAEPSVFTKTTADGVARVRKSKGKFAFLLESTMNEYIEQRKPCDTMKVGGNLDSKGYGVATPKGSALRTPVNLAVLKLSEQGILDKLKNKWWYDKGECGAKDSGSKDKTSALSLSNVAGVFYILVGGLGLAMMVALIEFCYKSRAESKRMKLTKNTQNFKPAPATNTQNYATYREGYNVYGTESVKI</sequence>
<reference key="1">
    <citation type="submission" date="1999-01" db="EMBL/GenBank/DDBJ databases">
        <title>Mouse glutamate receptor channel alpha3 subunit.</title>
        <authorList>
            <person name="Sakimura K."/>
            <person name="Yamazaki M."/>
        </authorList>
    </citation>
    <scope>NUCLEOTIDE SEQUENCE [MRNA]</scope>
    <source>
        <strain>C57BL/6J</strain>
    </source>
</reference>
<reference key="2">
    <citation type="submission" date="2002-01" db="EMBL/GenBank/DDBJ databases">
        <title>Expression of AMPA-selective glutamate receptors in mouse spinal cord.</title>
        <authorList>
            <person name="Doi Y."/>
            <person name="Nishizawa M."/>
            <person name="Minami T."/>
            <person name="Ito S."/>
        </authorList>
    </citation>
    <scope>NUCLEOTIDE SEQUENCE [MRNA]</scope>
    <source>
        <strain>ddY</strain>
        <tissue>Spinal cord</tissue>
    </source>
</reference>
<reference key="3">
    <citation type="journal article" date="2001" name="Mamm. Genome">
        <title>High-throughput sequence identification of gene coding variants within alcohol-related QTLs.</title>
        <authorList>
            <person name="Ehringer M.A."/>
            <person name="Thompson J."/>
            <person name="Conroy O."/>
            <person name="Xu Y."/>
            <person name="Yang F."/>
            <person name="Canniff J."/>
            <person name="Beeson M."/>
            <person name="Gordon L."/>
            <person name="Bennett B."/>
            <person name="Johnson T.E."/>
            <person name="Sikela J.M."/>
        </authorList>
    </citation>
    <scope>NUCLEOTIDE SEQUENCE [MRNA]</scope>
    <source>
        <strain>ILS</strain>
        <strain>ISS</strain>
    </source>
</reference>
<reference key="4">
    <citation type="submission" date="2005-02" db="EMBL/GenBank/DDBJ databases">
        <title>Prediction of the coding sequences of mouse homologues of KIAA gene. The complete nucleotide sequences of mouse KIAA-homologous cDNAs identified by screening of terminal sequences of cDNA clones randomly sampled from size-fractionated libraries.</title>
        <authorList>
            <person name="Okazaki N."/>
            <person name="Kikuno R.F."/>
            <person name="Ohara R."/>
            <person name="Inamoto S."/>
            <person name="Nagase T."/>
            <person name="Ohara O."/>
            <person name="Koga H."/>
        </authorList>
    </citation>
    <scope>NUCLEOTIDE SEQUENCE [LARGE SCALE MRNA]</scope>
    <source>
        <tissue>Brain</tissue>
    </source>
</reference>
<reference key="5">
    <citation type="journal article" date="2009" name="PLoS Biol.">
        <title>Lineage-specific biology revealed by a finished genome assembly of the mouse.</title>
        <authorList>
            <person name="Church D.M."/>
            <person name="Goodstadt L."/>
            <person name="Hillier L.W."/>
            <person name="Zody M.C."/>
            <person name="Goldstein S."/>
            <person name="She X."/>
            <person name="Bult C.J."/>
            <person name="Agarwala R."/>
            <person name="Cherry J.L."/>
            <person name="DiCuccio M."/>
            <person name="Hlavina W."/>
            <person name="Kapustin Y."/>
            <person name="Meric P."/>
            <person name="Maglott D."/>
            <person name="Birtle Z."/>
            <person name="Marques A.C."/>
            <person name="Graves T."/>
            <person name="Zhou S."/>
            <person name="Teague B."/>
            <person name="Potamousis K."/>
            <person name="Churas C."/>
            <person name="Place M."/>
            <person name="Herschleb J."/>
            <person name="Runnheim R."/>
            <person name="Forrest D."/>
            <person name="Amos-Landgraf J."/>
            <person name="Schwartz D.C."/>
            <person name="Cheng Z."/>
            <person name="Lindblad-Toh K."/>
            <person name="Eichler E.E."/>
            <person name="Ponting C.P."/>
        </authorList>
    </citation>
    <scope>NUCLEOTIDE SEQUENCE [LARGE SCALE GENOMIC DNA]</scope>
    <source>
        <strain>C57BL/6J</strain>
    </source>
</reference>
<reference key="6">
    <citation type="submission" date="2005-07" db="EMBL/GenBank/DDBJ databases">
        <authorList>
            <person name="Mural R.J."/>
            <person name="Adams M.D."/>
            <person name="Myers E.W."/>
            <person name="Smith H.O."/>
            <person name="Venter J.C."/>
        </authorList>
    </citation>
    <scope>NUCLEOTIDE SEQUENCE [LARGE SCALE GENOMIC DNA]</scope>
</reference>
<reference key="7">
    <citation type="journal article" date="2004" name="Genome Res.">
        <title>The status, quality, and expansion of the NIH full-length cDNA project: the Mammalian Gene Collection (MGC).</title>
        <authorList>
            <consortium name="The MGC Project Team"/>
        </authorList>
    </citation>
    <scope>NUCLEOTIDE SEQUENCE [LARGE SCALE MRNA]</scope>
</reference>
<reference key="8">
    <citation type="journal article" date="2005" name="Neuron">
        <title>Differential regulation of AMPA receptor subunit trafficking by palmitoylation of two distinct sites.</title>
        <authorList>
            <person name="Hayashi T."/>
            <person name="Rumbaugh G."/>
            <person name="Huganir R.L."/>
        </authorList>
    </citation>
    <scope>PALMITOYLATION AT CYS-841</scope>
</reference>
<reference key="9">
    <citation type="journal article" date="2008" name="J. Proteome Res.">
        <title>Large-scale identification and evolution indexing of tyrosine phosphorylation sites from murine brain.</title>
        <authorList>
            <person name="Ballif B.A."/>
            <person name="Carey G.R."/>
            <person name="Sunyaev S.R."/>
            <person name="Gygi S.P."/>
        </authorList>
    </citation>
    <scope>PHOSPHORYLATION [LARGE SCALE ANALYSIS] AT TYR-871 AND TYR-881</scope>
    <scope>IDENTIFICATION BY MASS SPECTROMETRY [LARGE SCALE ANALYSIS]</scope>
    <source>
        <tissue>Brain</tissue>
    </source>
</reference>
<reference key="10">
    <citation type="journal article" date="2010" name="Cell">
        <title>A tissue-specific atlas of mouse protein phosphorylation and expression.</title>
        <authorList>
            <person name="Huttlin E.L."/>
            <person name="Jedrychowski M.P."/>
            <person name="Elias J.E."/>
            <person name="Goswami T."/>
            <person name="Rad R."/>
            <person name="Beausoleil S.A."/>
            <person name="Villen J."/>
            <person name="Haas W."/>
            <person name="Sowa M.E."/>
            <person name="Gygi S.P."/>
        </authorList>
    </citation>
    <scope>IDENTIFICATION BY MASS SPECTROMETRY [LARGE SCALE ANALYSIS]</scope>
    <source>
        <tissue>Brain</tissue>
    </source>
</reference>
<reference key="11">
    <citation type="journal article" date="2017" name="Neuron">
        <title>Motor Learning Requires Purkinje Cell Synaptic Potentiation through Activation of AMPA-Receptor Subunit GluA3.</title>
        <authorList>
            <person name="Gutierrez-Castellanos N."/>
            <person name="Da Silva-Matos C.M."/>
            <person name="Zhou K."/>
            <person name="Canto C.B."/>
            <person name="Renner M.C."/>
            <person name="Koene L.M.C."/>
            <person name="Ozyildirim O."/>
            <person name="Sprengel R."/>
            <person name="Kessels H.W."/>
            <person name="De Zeeuw C.I."/>
        </authorList>
    </citation>
    <scope>FUNCTION</scope>
</reference>
<reference key="12">
    <citation type="journal article" date="2021" name="Nature">
        <title>Hippocampal AMPA receptor assemblies and mechanism of allosteric inhibition.</title>
        <authorList>
            <person name="Yu J."/>
            <person name="Rao P."/>
            <person name="Clark S."/>
            <person name="Mitra J."/>
            <person name="Ha T."/>
            <person name="Gouaux E."/>
        </authorList>
    </citation>
    <scope>SUBUNIT</scope>
</reference>
<reference evidence="13 14" key="13">
    <citation type="journal article" date="2010" name="J. Med. Chem.">
        <title>Piracetam defines a new binding site for allosteric modulators of alpha-amino-3-hydroxy-5-methyl-4-isoxazole-propionic acid (AMPA) receptors.</title>
        <authorList>
            <person name="Ahmed A.H."/>
            <person name="Oswald R.E."/>
        </authorList>
    </citation>
    <scope>X-RAY CRYSTALLOGRAPHY (1.75 ANGSTROMS) OF 658-799 IN COMPLEX WITH L-GLUTAMATE</scope>
    <scope>SUBUNIT</scope>
    <scope>DISULFIDE BOND</scope>
</reference>
<keyword id="KW-0002">3D-structure</keyword>
<keyword id="KW-0025">Alternative splicing</keyword>
<keyword id="KW-1003">Cell membrane</keyword>
<keyword id="KW-1015">Disulfide bond</keyword>
<keyword id="KW-0325">Glycoprotein</keyword>
<keyword id="KW-0407">Ion channel</keyword>
<keyword id="KW-0406">Ion transport</keyword>
<keyword id="KW-1071">Ligand-gated ion channel</keyword>
<keyword id="KW-0449">Lipoprotein</keyword>
<keyword id="KW-0472">Membrane</keyword>
<keyword id="KW-0564">Palmitate</keyword>
<keyword id="KW-0597">Phosphoprotein</keyword>
<keyword id="KW-0628">Postsynaptic cell membrane</keyword>
<keyword id="KW-0675">Receptor</keyword>
<keyword id="KW-1185">Reference proteome</keyword>
<keyword id="KW-0732">Signal</keyword>
<keyword id="KW-0770">Synapse</keyword>
<keyword id="KW-0812">Transmembrane</keyword>
<keyword id="KW-1133">Transmembrane helix</keyword>
<keyword id="KW-0813">Transport</keyword>
<comment type="function">
    <text evidence="2 5 9">Ionotropic glutamate receptor that functions as a ligand-gated cation channel, gated by L-glutamate and glutamatergic agonists such as alpha-amino-3-hydroxy-5-methyl-4-isoxazolepropionic acid (AMPA), quisqualic acid, and kainic acid (By similarity). L-glutamate acts as an excitatory neurotransmitter at many synapses in the central nervous system and plays an important role in fast excitatory synaptic transmission by inducing long-term potentiation (PubMed:28103481). Binding of the excitatory neurotransmitter L-glutamate induces a conformation change, leading to the opening of the cation channel, and thereby converts the chemical signal to an electrical impulse upon entry of calcium (By similarity). The receptor then desensitizes rapidly and enters a transient inactive state, characterized by the presence of bound agonist. In the presence of CACNG8, shows resensitization which is characterized by a delayed accumulation of current flux upon continued application of glutamate (By similarity).</text>
</comment>
<comment type="catalytic activity">
    <reaction evidence="2">
        <text>Ca(2+)(in) = Ca(2+)(out)</text>
        <dbReference type="Rhea" id="RHEA:29671"/>
        <dbReference type="ChEBI" id="CHEBI:29108"/>
    </reaction>
</comment>
<comment type="subunit">
    <text evidence="2 10">Homotetramer or heterotetramer of pore-forming glutamate receptor subunits (PubMed:33981040). Tetramers may be formed by the dimerization of dimers. Interacts with PICK1, GRIP1 and GRIP2. Found in a complex with GRIA1, GRIA2, GRIA4, CNIH2, CNIH3, CACNG2, CACNG3, CACNG4, CACNG5, CACNG7 and CACNG8. Interacts with CACNG5 (By similarity). Found in a complex with GRIA1, GRIA2, GRIA4, DLG4, CACNG8 and CNIH2 (PubMed:33981040).</text>
</comment>
<comment type="subcellular location">
    <subcellularLocation>
        <location evidence="2">Cell membrane</location>
        <topology evidence="2">Multi-pass membrane protein</topology>
    </subcellularLocation>
    <subcellularLocation>
        <location evidence="2">Postsynaptic cell membrane</location>
        <topology evidence="2">Multi-pass membrane protein</topology>
    </subcellularLocation>
    <subcellularLocation>
        <location evidence="2">Postsynaptic density membrane</location>
    </subcellularLocation>
</comment>
<comment type="alternative products">
    <event type="alternative splicing"/>
    <isoform>
        <id>Q9Z2W9-1</id>
        <name>Flip</name>
        <sequence type="displayed"/>
    </isoform>
    <isoform>
        <id>Q9Z2W9-2</id>
        <name>Flop</name>
        <sequence type="not described"/>
    </isoform>
</comment>
<comment type="miscellaneous">
    <text evidence="2">The postsynaptic actions of Glu are mediated by a variety of receptors that are named according to their selective agonists. This receptor binds AMPA (quisqualate) &gt; glutamate &gt; kainate.</text>
</comment>
<comment type="similarity">
    <text evidence="11">Belongs to the glutamate-gated ion channel (TC 1.A.10.1) family. GRIA3 subfamily.</text>
</comment>
<comment type="sequence caution" evidence="11">
    <conflict type="erroneous initiation">
        <sequence resource="EMBL-CDS" id="BAD90527"/>
    </conflict>
    <text>Extended N-terminus.</text>
</comment>
<feature type="signal peptide" evidence="6">
    <location>
        <begin position="1"/>
        <end position="22"/>
    </location>
</feature>
<feature type="chain" id="PRO_0000042230" description="Glutamate receptor 3">
    <location>
        <begin position="23"/>
        <end position="888"/>
    </location>
</feature>
<feature type="topological domain" description="Extracellular" evidence="1">
    <location>
        <begin position="23"/>
        <end position="546"/>
    </location>
</feature>
<feature type="transmembrane region" description="Helical" evidence="1">
    <location>
        <begin position="547"/>
        <end position="567"/>
    </location>
</feature>
<feature type="topological domain" description="Cytoplasmic" evidence="1">
    <location>
        <begin position="568"/>
        <end position="596"/>
    </location>
</feature>
<feature type="intramembrane region" description="Helical; Pore-forming" evidence="1">
    <location>
        <begin position="597"/>
        <end position="612"/>
    </location>
</feature>
<feature type="intramembrane region" evidence="1">
    <location>
        <begin position="613"/>
        <end position="615"/>
    </location>
</feature>
<feature type="topological domain" description="Cytoplasmic" evidence="1">
    <location>
        <begin position="616"/>
        <end position="621"/>
    </location>
</feature>
<feature type="transmembrane region" description="Helical" evidence="1">
    <location>
        <begin position="622"/>
        <end position="642"/>
    </location>
</feature>
<feature type="topological domain" description="Extracellular" evidence="1">
    <location>
        <begin position="643"/>
        <end position="817"/>
    </location>
</feature>
<feature type="transmembrane region" description="Helical; Name=M4" evidence="1">
    <location>
        <begin position="818"/>
        <end position="838"/>
    </location>
</feature>
<feature type="topological domain" description="Cytoplasmic" evidence="1">
    <location>
        <begin position="839"/>
        <end position="888"/>
    </location>
</feature>
<feature type="binding site" evidence="8 13 14">
    <location>
        <position position="502"/>
    </location>
    <ligand>
        <name>L-glutamate</name>
        <dbReference type="ChEBI" id="CHEBI:29985"/>
    </ligand>
</feature>
<feature type="binding site" evidence="8 13 14">
    <location>
        <position position="504"/>
    </location>
    <ligand>
        <name>L-glutamate</name>
        <dbReference type="ChEBI" id="CHEBI:29985"/>
    </ligand>
</feature>
<feature type="binding site" evidence="8 13 14">
    <location>
        <position position="509"/>
    </location>
    <ligand>
        <name>L-glutamate</name>
        <dbReference type="ChEBI" id="CHEBI:29985"/>
    </ligand>
</feature>
<feature type="binding site" evidence="8 13 14">
    <location>
        <position position="680"/>
    </location>
    <ligand>
        <name>L-glutamate</name>
        <dbReference type="ChEBI" id="CHEBI:29985"/>
    </ligand>
</feature>
<feature type="binding site" evidence="8 13 14">
    <location>
        <position position="681"/>
    </location>
    <ligand>
        <name>L-glutamate</name>
        <dbReference type="ChEBI" id="CHEBI:29985"/>
    </ligand>
</feature>
<feature type="binding site" evidence="8 13 14">
    <location>
        <position position="731"/>
    </location>
    <ligand>
        <name>L-glutamate</name>
        <dbReference type="ChEBI" id="CHEBI:29985"/>
    </ligand>
</feature>
<feature type="modified residue" description="Phosphotyrosine" evidence="15">
    <location>
        <position position="871"/>
    </location>
</feature>
<feature type="modified residue" description="Phosphotyrosine" evidence="15">
    <location>
        <position position="881"/>
    </location>
</feature>
<feature type="lipid moiety-binding region" description="S-palmitoyl cysteine" evidence="3">
    <location>
        <position position="615"/>
    </location>
</feature>
<feature type="lipid moiety-binding region" description="S-palmitoyl cysteine" evidence="7">
    <location>
        <position position="841"/>
    </location>
</feature>
<feature type="glycosylation site" description="N-linked (GlcNAc...) asparagine" evidence="6">
    <location>
        <position position="57"/>
    </location>
</feature>
<feature type="glycosylation site" description="N-linked (GlcNAc...) asparagine" evidence="6">
    <location>
        <position position="260"/>
    </location>
</feature>
<feature type="glycosylation site" description="N-linked (GlcNAc...) asparagine" evidence="6">
    <location>
        <position position="374"/>
    </location>
</feature>
<feature type="glycosylation site" description="N-linked (GlcNAc...) asparagine" evidence="6">
    <location>
        <position position="409"/>
    </location>
</feature>
<feature type="glycosylation site" description="N-linked (GlcNAc...) asparagine" evidence="6">
    <location>
        <position position="416"/>
    </location>
</feature>
<feature type="disulfide bond" evidence="4">
    <location>
        <begin position="85"/>
        <end position="334"/>
    </location>
</feature>
<feature type="disulfide bond" evidence="8">
    <location>
        <begin position="744"/>
        <end position="799"/>
    </location>
</feature>
<feature type="sequence conflict" description="In Ref. 4; BAD90527." evidence="11" ref="4">
    <original>T</original>
    <variation>I</variation>
    <location>
        <position position="300"/>
    </location>
</feature>
<feature type="sequence conflict" description="In Ref. 1; BAA37124/BAE06153, 3; AAL90768/AAL90769 and 4; BAD90527." evidence="11" ref="1 3 4">
    <original>R</original>
    <variation>G</variation>
    <location>
        <position position="769"/>
    </location>
</feature>
<feature type="strand" evidence="17">
    <location>
        <begin position="418"/>
        <end position="423"/>
    </location>
</feature>
<feature type="turn" evidence="17">
    <location>
        <begin position="427"/>
        <end position="429"/>
    </location>
</feature>
<feature type="strand" evidence="17">
    <location>
        <begin position="430"/>
        <end position="432"/>
    </location>
</feature>
<feature type="helix" evidence="17">
    <location>
        <begin position="436"/>
        <end position="438"/>
    </location>
</feature>
<feature type="helix" evidence="17">
    <location>
        <begin position="441"/>
        <end position="444"/>
    </location>
</feature>
<feature type="strand" evidence="17">
    <location>
        <begin position="445"/>
        <end position="447"/>
    </location>
</feature>
<feature type="helix" evidence="17">
    <location>
        <begin position="448"/>
        <end position="460"/>
    </location>
</feature>
<feature type="strand" evidence="17">
    <location>
        <begin position="463"/>
        <end position="468"/>
    </location>
</feature>
<feature type="turn" evidence="17">
    <location>
        <begin position="479"/>
        <end position="481"/>
    </location>
</feature>
<feature type="helix" evidence="17">
    <location>
        <begin position="486"/>
        <end position="492"/>
    </location>
</feature>
<feature type="strand" evidence="17">
    <location>
        <begin position="497"/>
        <end position="499"/>
    </location>
</feature>
<feature type="helix" evidence="17">
    <location>
        <begin position="507"/>
        <end position="510"/>
    </location>
</feature>
<feature type="strand" evidence="17">
    <location>
        <begin position="513"/>
        <end position="515"/>
    </location>
</feature>
<feature type="strand" evidence="17">
    <location>
        <begin position="519"/>
        <end position="522"/>
    </location>
</feature>
<feature type="strand" evidence="17">
    <location>
        <begin position="524"/>
        <end position="529"/>
    </location>
</feature>
<feature type="helix" evidence="17">
    <location>
        <begin position="662"/>
        <end position="666"/>
    </location>
</feature>
<feature type="strand" evidence="17">
    <location>
        <begin position="669"/>
        <end position="676"/>
    </location>
</feature>
<feature type="helix" evidence="17">
    <location>
        <begin position="680"/>
        <end position="687"/>
    </location>
</feature>
<feature type="helix" evidence="17">
    <location>
        <begin position="691"/>
        <end position="702"/>
    </location>
</feature>
<feature type="strand" evidence="17">
    <location>
        <begin position="708"/>
        <end position="711"/>
    </location>
</feature>
<feature type="helix" evidence="17">
    <location>
        <begin position="712"/>
        <end position="721"/>
    </location>
</feature>
<feature type="turn" evidence="17">
    <location>
        <begin position="722"/>
        <end position="724"/>
    </location>
</feature>
<feature type="strand" evidence="17">
    <location>
        <begin position="725"/>
        <end position="731"/>
    </location>
</feature>
<feature type="helix" evidence="17">
    <location>
        <begin position="732"/>
        <end position="739"/>
    </location>
</feature>
<feature type="strand" evidence="17">
    <location>
        <begin position="746"/>
        <end position="750"/>
    </location>
</feature>
<feature type="strand" evidence="17">
    <location>
        <begin position="756"/>
        <end position="758"/>
    </location>
</feature>
<feature type="strand" evidence="17">
    <location>
        <begin position="761"/>
        <end position="763"/>
    </location>
</feature>
<feature type="helix" evidence="16">
    <location>
        <begin position="770"/>
        <end position="781"/>
    </location>
</feature>
<feature type="helix" evidence="16">
    <location>
        <begin position="784"/>
        <end position="793"/>
    </location>
</feature>
<feature type="turn" evidence="16">
    <location>
        <begin position="794"/>
        <end position="796"/>
    </location>
</feature>
<protein>
    <recommendedName>
        <fullName evidence="11">Glutamate receptor 3</fullName>
        <shortName>GluR-3</shortName>
    </recommendedName>
    <alternativeName>
        <fullName>AMPA-selective glutamate receptor 3</fullName>
    </alternativeName>
    <alternativeName>
        <fullName>GluR-C</fullName>
    </alternativeName>
    <alternativeName>
        <fullName>GluR-K3</fullName>
    </alternativeName>
    <alternativeName>
        <fullName>Glutamate receptor ionotropic, AMPA 3</fullName>
    </alternativeName>
</protein>
<accession>Q9Z2W9</accession>
<accession>A2VDF4</accession>
<accession>Q5DTJ0</accession>
<evidence type="ECO:0000250" key="1"/>
<evidence type="ECO:0000250" key="2">
    <source>
        <dbReference type="UniProtKB" id="P19492"/>
    </source>
</evidence>
<evidence type="ECO:0000250" key="3">
    <source>
        <dbReference type="UniProtKB" id="P23819"/>
    </source>
</evidence>
<evidence type="ECO:0000250" key="4">
    <source>
        <dbReference type="UniProtKB" id="P42262"/>
    </source>
</evidence>
<evidence type="ECO:0000250" key="5">
    <source>
        <dbReference type="UniProtKB" id="P42263"/>
    </source>
</evidence>
<evidence type="ECO:0000255" key="6"/>
<evidence type="ECO:0000269" key="7">
    <source>
    </source>
</evidence>
<evidence type="ECO:0000269" key="8">
    <source>
    </source>
</evidence>
<evidence type="ECO:0000269" key="9">
    <source>
    </source>
</evidence>
<evidence type="ECO:0000269" key="10">
    <source>
    </source>
</evidence>
<evidence type="ECO:0000305" key="11"/>
<evidence type="ECO:0000312" key="12">
    <source>
        <dbReference type="MGI" id="MGI:95810"/>
    </source>
</evidence>
<evidence type="ECO:0007744" key="13">
    <source>
        <dbReference type="PDB" id="3LSW"/>
    </source>
</evidence>
<evidence type="ECO:0007744" key="14">
    <source>
        <dbReference type="PDB" id="3LSX"/>
    </source>
</evidence>
<evidence type="ECO:0007744" key="15">
    <source>
    </source>
</evidence>
<evidence type="ECO:0007829" key="16">
    <source>
        <dbReference type="PDB" id="3LSW"/>
    </source>
</evidence>
<evidence type="ECO:0007829" key="17">
    <source>
        <dbReference type="PDB" id="3LSX"/>
    </source>
</evidence>
<organism>
    <name type="scientific">Mus musculus</name>
    <name type="common">Mouse</name>
    <dbReference type="NCBI Taxonomy" id="10090"/>
    <lineage>
        <taxon>Eukaryota</taxon>
        <taxon>Metazoa</taxon>
        <taxon>Chordata</taxon>
        <taxon>Craniata</taxon>
        <taxon>Vertebrata</taxon>
        <taxon>Euteleostomi</taxon>
        <taxon>Mammalia</taxon>
        <taxon>Eutheria</taxon>
        <taxon>Euarchontoglires</taxon>
        <taxon>Glires</taxon>
        <taxon>Rodentia</taxon>
        <taxon>Myomorpha</taxon>
        <taxon>Muroidea</taxon>
        <taxon>Muridae</taxon>
        <taxon>Murinae</taxon>
        <taxon>Mus</taxon>
        <taxon>Mus</taxon>
    </lineage>
</organism>
<dbReference type="EMBL" id="AB022342">
    <property type="protein sequence ID" value="BAA37124.1"/>
    <property type="molecule type" value="mRNA"/>
</dbReference>
<dbReference type="EMBL" id="AB079072">
    <property type="protein sequence ID" value="BAE06153.1"/>
    <property type="molecule type" value="mRNA"/>
</dbReference>
<dbReference type="EMBL" id="AF483494">
    <property type="protein sequence ID" value="AAL90768.1"/>
    <property type="molecule type" value="mRNA"/>
</dbReference>
<dbReference type="EMBL" id="AF483495">
    <property type="protein sequence ID" value="AAL90769.1"/>
    <property type="molecule type" value="mRNA"/>
</dbReference>
<dbReference type="EMBL" id="AK220530">
    <property type="protein sequence ID" value="BAD90527.1"/>
    <property type="status" value="ALT_INIT"/>
    <property type="molecule type" value="mRNA"/>
</dbReference>
<dbReference type="EMBL" id="CH466570">
    <property type="protein sequence ID" value="EDL29035.1"/>
    <property type="molecule type" value="Genomic_DNA"/>
</dbReference>
<dbReference type="EMBL" id="AL672232">
    <property type="status" value="NOT_ANNOTATED_CDS"/>
    <property type="molecule type" value="Genomic_DNA"/>
</dbReference>
<dbReference type="EMBL" id="AL672290">
    <property type="status" value="NOT_ANNOTATED_CDS"/>
    <property type="molecule type" value="Genomic_DNA"/>
</dbReference>
<dbReference type="EMBL" id="BC129855">
    <property type="protein sequence ID" value="AAI29856.1"/>
    <property type="molecule type" value="mRNA"/>
</dbReference>
<dbReference type="CCDS" id="CCDS30097.1">
    <molecule id="Q9Z2W9-1"/>
</dbReference>
<dbReference type="RefSeq" id="NP_001268858.2">
    <molecule id="Q9Z2W9-1"/>
    <property type="nucleotide sequence ID" value="NM_001281929.2"/>
</dbReference>
<dbReference type="RefSeq" id="NP_001345290.2">
    <molecule id="Q9Z2W9-1"/>
    <property type="nucleotide sequence ID" value="NM_001358361.2"/>
</dbReference>
<dbReference type="RefSeq" id="NP_058582.4">
    <molecule id="Q9Z2W9-1"/>
    <property type="nucleotide sequence ID" value="NM_016886.5"/>
</dbReference>
<dbReference type="RefSeq" id="XP_006541583.1">
    <property type="nucleotide sequence ID" value="XM_006541520.3"/>
</dbReference>
<dbReference type="RefSeq" id="XP_017174034.1">
    <molecule id="Q9Z2W9-1"/>
    <property type="nucleotide sequence ID" value="XM_017318545.3"/>
</dbReference>
<dbReference type="PDB" id="3LSW">
    <property type="method" value="X-ray"/>
    <property type="resolution" value="1.75 A"/>
    <property type="chains" value="A=658-799"/>
</dbReference>
<dbReference type="PDB" id="3LSX">
    <property type="method" value="X-ray"/>
    <property type="resolution" value="2.01 A"/>
    <property type="chains" value="A=658-799"/>
</dbReference>
<dbReference type="PDBsum" id="3LSW"/>
<dbReference type="PDBsum" id="3LSX"/>
<dbReference type="EMDB" id="EMD-23285"/>
<dbReference type="EMDB" id="EMD-23286"/>
<dbReference type="EMDB" id="EMD-23287"/>
<dbReference type="EMDB" id="EMD-23288"/>
<dbReference type="SMR" id="Q9Z2W9"/>
<dbReference type="BioGRID" id="207340">
    <property type="interactions" value="12"/>
</dbReference>
<dbReference type="FunCoup" id="Q9Z2W9">
    <property type="interactions" value="818"/>
</dbReference>
<dbReference type="IntAct" id="Q9Z2W9">
    <property type="interactions" value="6"/>
</dbReference>
<dbReference type="MINT" id="Q9Z2W9"/>
<dbReference type="STRING" id="10090.ENSMUSP00000075687"/>
<dbReference type="ChEMBL" id="CHEMBL2096617"/>
<dbReference type="GlyConnect" id="2343">
    <property type="glycosylation" value="7 N-Linked glycans (2 sites)"/>
</dbReference>
<dbReference type="GlyCosmos" id="Q9Z2W9">
    <property type="glycosylation" value="5 sites, 7 glycans"/>
</dbReference>
<dbReference type="GlyGen" id="Q9Z2W9">
    <property type="glycosylation" value="8 sites, 11 N-linked glycans (4 sites), 1 O-linked glycan (2 sites)"/>
</dbReference>
<dbReference type="iPTMnet" id="Q9Z2W9"/>
<dbReference type="PhosphoSitePlus" id="Q9Z2W9"/>
<dbReference type="SwissPalm" id="Q9Z2W9"/>
<dbReference type="PaxDb" id="10090-ENSMUSP00000075687"/>
<dbReference type="PeptideAtlas" id="Q9Z2W9"/>
<dbReference type="ProteomicsDB" id="271162">
    <molecule id="Q9Z2W9-1"/>
</dbReference>
<dbReference type="Antibodypedia" id="29962">
    <property type="antibodies" value="348 antibodies from 30 providers"/>
</dbReference>
<dbReference type="DNASU" id="53623"/>
<dbReference type="Ensembl" id="ENSMUST00000076349.12">
    <molecule id="Q9Z2W9-1"/>
    <property type="protein sequence ID" value="ENSMUSP00000075687.6"/>
    <property type="gene ID" value="ENSMUSG00000001986.17"/>
</dbReference>
<dbReference type="GeneID" id="53623"/>
<dbReference type="KEGG" id="mmu:53623"/>
<dbReference type="UCSC" id="uc009tal.3">
    <molecule id="Q9Z2W9-1"/>
    <property type="organism name" value="mouse"/>
</dbReference>
<dbReference type="AGR" id="MGI:95810"/>
<dbReference type="CTD" id="2892"/>
<dbReference type="MGI" id="MGI:95810">
    <property type="gene designation" value="Gria3"/>
</dbReference>
<dbReference type="VEuPathDB" id="HostDB:ENSMUSG00000001986"/>
<dbReference type="eggNOG" id="KOG1054">
    <property type="taxonomic scope" value="Eukaryota"/>
</dbReference>
<dbReference type="GeneTree" id="ENSGT00940000156123"/>
<dbReference type="InParanoid" id="Q9Z2W9"/>
<dbReference type="OrthoDB" id="5984008at2759"/>
<dbReference type="TreeFam" id="TF315232"/>
<dbReference type="Reactome" id="R-MMU-399710">
    <property type="pathway name" value="Activation of AMPA receptors"/>
</dbReference>
<dbReference type="Reactome" id="R-MMU-399719">
    <property type="pathway name" value="Trafficking of AMPA receptors"/>
</dbReference>
<dbReference type="Reactome" id="R-MMU-416993">
    <property type="pathway name" value="Trafficking of GluR2-containing AMPA receptors"/>
</dbReference>
<dbReference type="Reactome" id="R-MMU-438066">
    <property type="pathway name" value="Unblocking of NMDA receptors, glutamate binding and activation"/>
</dbReference>
<dbReference type="Reactome" id="R-MMU-8849932">
    <property type="pathway name" value="Synaptic adhesion-like molecules"/>
</dbReference>
<dbReference type="BioGRID-ORCS" id="53623">
    <property type="hits" value="2 hits in 79 CRISPR screens"/>
</dbReference>
<dbReference type="CD-CODE" id="CE726F99">
    <property type="entry name" value="Postsynaptic density"/>
</dbReference>
<dbReference type="ChiTaRS" id="Gria3">
    <property type="organism name" value="mouse"/>
</dbReference>
<dbReference type="EvolutionaryTrace" id="Q9Z2W9"/>
<dbReference type="PRO" id="PR:Q9Z2W9"/>
<dbReference type="Proteomes" id="UP000000589">
    <property type="component" value="Chromosome X"/>
</dbReference>
<dbReference type="RNAct" id="Q9Z2W9">
    <property type="molecule type" value="protein"/>
</dbReference>
<dbReference type="Bgee" id="ENSMUSG00000001986">
    <property type="expression patterns" value="Expressed in subiculum and 198 other cell types or tissues"/>
</dbReference>
<dbReference type="ExpressionAtlas" id="Q9Z2W9">
    <property type="expression patterns" value="baseline and differential"/>
</dbReference>
<dbReference type="GO" id="GO:0032281">
    <property type="term" value="C:AMPA glutamate receptor complex"/>
    <property type="evidence" value="ECO:0000314"/>
    <property type="project" value="MGI"/>
</dbReference>
<dbReference type="GO" id="GO:0016020">
    <property type="term" value="C:membrane"/>
    <property type="evidence" value="ECO:0000314"/>
    <property type="project" value="MGI"/>
</dbReference>
<dbReference type="GO" id="GO:0098688">
    <property type="term" value="C:parallel fiber to Purkinje cell synapse"/>
    <property type="evidence" value="ECO:0000314"/>
    <property type="project" value="SynGO"/>
</dbReference>
<dbReference type="GO" id="GO:0098839">
    <property type="term" value="C:postsynaptic density membrane"/>
    <property type="evidence" value="ECO:0007669"/>
    <property type="project" value="UniProtKB-SubCell"/>
</dbReference>
<dbReference type="GO" id="GO:0045211">
    <property type="term" value="C:postsynaptic membrane"/>
    <property type="evidence" value="ECO:0000314"/>
    <property type="project" value="MGI"/>
</dbReference>
<dbReference type="GO" id="GO:0004971">
    <property type="term" value="F:AMPA glutamate receptor activity"/>
    <property type="evidence" value="ECO:0000250"/>
    <property type="project" value="UniProtKB"/>
</dbReference>
<dbReference type="GO" id="GO:0022849">
    <property type="term" value="F:glutamate-gated calcium ion channel activity"/>
    <property type="evidence" value="ECO:0000250"/>
    <property type="project" value="UniProtKB"/>
</dbReference>
<dbReference type="GO" id="GO:0004970">
    <property type="term" value="F:glutamate-gated receptor activity"/>
    <property type="evidence" value="ECO:0000250"/>
    <property type="project" value="UniProtKB"/>
</dbReference>
<dbReference type="GO" id="GO:0099507">
    <property type="term" value="F:ligand-gated monoatomic ion channel activity involved in regulation of presynaptic membrane potential"/>
    <property type="evidence" value="ECO:0007669"/>
    <property type="project" value="Ensembl"/>
</dbReference>
<dbReference type="GO" id="GO:1904315">
    <property type="term" value="F:transmitter-gated monoatomic ion channel activity involved in regulation of postsynaptic membrane potential"/>
    <property type="evidence" value="ECO:0000314"/>
    <property type="project" value="SynGO"/>
</dbReference>
<dbReference type="GO" id="GO:0060291">
    <property type="term" value="P:long-term synaptic potentiation"/>
    <property type="evidence" value="ECO:0000315"/>
    <property type="project" value="UniProtKB"/>
</dbReference>
<dbReference type="GO" id="GO:0051290">
    <property type="term" value="P:protein heterotetramerization"/>
    <property type="evidence" value="ECO:0000250"/>
    <property type="project" value="UniProtKB"/>
</dbReference>
<dbReference type="GO" id="GO:0051289">
    <property type="term" value="P:protein homotetramerization"/>
    <property type="evidence" value="ECO:0000250"/>
    <property type="project" value="UniProtKB"/>
</dbReference>
<dbReference type="CDD" id="cd06387">
    <property type="entry name" value="PBP1_iGluR_AMPA_GluR3"/>
    <property type="match status" value="1"/>
</dbReference>
<dbReference type="CDD" id="cd13715">
    <property type="entry name" value="PBP2_iGluR_AMPA"/>
    <property type="match status" value="1"/>
</dbReference>
<dbReference type="FunFam" id="1.10.287.70:FF:000067">
    <property type="entry name" value="glutamate receptor 2 isoform X1"/>
    <property type="match status" value="1"/>
</dbReference>
<dbReference type="FunFam" id="1.10.287.70:FF:000099">
    <property type="entry name" value="glutamate receptor 2 isoform X1"/>
    <property type="match status" value="1"/>
</dbReference>
<dbReference type="FunFam" id="3.40.190.10:FF:000001">
    <property type="entry name" value="Glutamate receptor ionotropic, kainate 2"/>
    <property type="match status" value="1"/>
</dbReference>
<dbReference type="FunFam" id="3.40.50.2300:FF:000004">
    <property type="entry name" value="Glutamate receptor, ionotropic, AMPA 2"/>
    <property type="match status" value="1"/>
</dbReference>
<dbReference type="FunFam" id="3.40.190.10:FF:000666">
    <property type="entry name" value="Glutamate receptor, ionotropic, AMPA 2a"/>
    <property type="match status" value="1"/>
</dbReference>
<dbReference type="Gene3D" id="1.10.287.70">
    <property type="match status" value="2"/>
</dbReference>
<dbReference type="Gene3D" id="3.40.50.2300">
    <property type="match status" value="2"/>
</dbReference>
<dbReference type="Gene3D" id="3.40.190.10">
    <property type="entry name" value="Periplasmic binding protein-like II"/>
    <property type="match status" value="2"/>
</dbReference>
<dbReference type="InterPro" id="IPR001828">
    <property type="entry name" value="ANF_lig-bd_rcpt"/>
</dbReference>
<dbReference type="InterPro" id="IPR019594">
    <property type="entry name" value="Glu/Gly-bd"/>
</dbReference>
<dbReference type="InterPro" id="IPR001508">
    <property type="entry name" value="Iono_Glu_rcpt_met"/>
</dbReference>
<dbReference type="InterPro" id="IPR015683">
    <property type="entry name" value="Ionotropic_Glu_rcpt"/>
</dbReference>
<dbReference type="InterPro" id="IPR001320">
    <property type="entry name" value="Iontro_rcpt_C"/>
</dbReference>
<dbReference type="InterPro" id="IPR028082">
    <property type="entry name" value="Peripla_BP_I"/>
</dbReference>
<dbReference type="PANTHER" id="PTHR18966">
    <property type="entry name" value="IONOTROPIC GLUTAMATE RECEPTOR"/>
    <property type="match status" value="1"/>
</dbReference>
<dbReference type="Pfam" id="PF01094">
    <property type="entry name" value="ANF_receptor"/>
    <property type="match status" value="1"/>
</dbReference>
<dbReference type="Pfam" id="PF00060">
    <property type="entry name" value="Lig_chan"/>
    <property type="match status" value="1"/>
</dbReference>
<dbReference type="Pfam" id="PF10613">
    <property type="entry name" value="Lig_chan-Glu_bd"/>
    <property type="match status" value="1"/>
</dbReference>
<dbReference type="PRINTS" id="PR00177">
    <property type="entry name" value="NMDARECEPTOR"/>
</dbReference>
<dbReference type="SMART" id="SM00918">
    <property type="entry name" value="Lig_chan-Glu_bd"/>
    <property type="match status" value="1"/>
</dbReference>
<dbReference type="SMART" id="SM00079">
    <property type="entry name" value="PBPe"/>
    <property type="match status" value="1"/>
</dbReference>
<dbReference type="SUPFAM" id="SSF53822">
    <property type="entry name" value="Periplasmic binding protein-like I"/>
    <property type="match status" value="1"/>
</dbReference>
<dbReference type="SUPFAM" id="SSF53850">
    <property type="entry name" value="Periplasmic binding protein-like II"/>
    <property type="match status" value="1"/>
</dbReference>
<dbReference type="SUPFAM" id="SSF81324">
    <property type="entry name" value="Voltage-gated potassium channels"/>
    <property type="match status" value="1"/>
</dbReference>
<name>GRIA3_MOUSE</name>